<reference key="1">
    <citation type="journal article" date="1992" name="FEBS Lett.">
        <title>The single-copy gene psbS codes for a phylogenetically intriguing 22 kDa polypeptide of photosystem II.</title>
        <authorList>
            <person name="Wedel N."/>
            <person name="Klein R."/>
            <person name="Ljungberg U."/>
            <person name="Andersson B."/>
            <person name="Herrmann R.G."/>
        </authorList>
    </citation>
    <scope>NUCLEOTIDE SEQUENCE [MRNA]</scope>
    <source>
        <strain>cv. Monatol</strain>
        <tissue>Leaf</tissue>
    </source>
</reference>
<reference key="2">
    <citation type="journal article" date="1992" name="FEBS Lett.">
        <title>Characterization of a spinach psbS cDNA encoding the 22 kDa protein of photosystem II.</title>
        <authorList>
            <person name="Kim S."/>
            <person name="Sandusky P."/>
            <person name="Bowlby N.R."/>
            <person name="Aebersold R."/>
            <person name="Green B.R."/>
            <person name="Vlahakis S."/>
            <person name="Yocum C.F."/>
            <person name="Pichersky E."/>
        </authorList>
    </citation>
    <scope>CHARACTERIZATION</scope>
</reference>
<name>PSBS_SPIOL</name>
<organism>
    <name type="scientific">Spinacia oleracea</name>
    <name type="common">Spinach</name>
    <dbReference type="NCBI Taxonomy" id="3562"/>
    <lineage>
        <taxon>Eukaryota</taxon>
        <taxon>Viridiplantae</taxon>
        <taxon>Streptophyta</taxon>
        <taxon>Embryophyta</taxon>
        <taxon>Tracheophyta</taxon>
        <taxon>Spermatophyta</taxon>
        <taxon>Magnoliopsida</taxon>
        <taxon>eudicotyledons</taxon>
        <taxon>Gunneridae</taxon>
        <taxon>Pentapetalae</taxon>
        <taxon>Caryophyllales</taxon>
        <taxon>Chenopodiaceae</taxon>
        <taxon>Chenopodioideae</taxon>
        <taxon>Anserineae</taxon>
        <taxon>Spinacia</taxon>
    </lineage>
</organism>
<evidence type="ECO:0000250" key="1"/>
<evidence type="ECO:0000255" key="2"/>
<evidence type="ECO:0000305" key="3"/>
<evidence type="ECO:0007829" key="4">
    <source>
        <dbReference type="PDB" id="4RI2"/>
    </source>
</evidence>
<evidence type="ECO:0007829" key="5">
    <source>
        <dbReference type="PDB" id="4RI3"/>
    </source>
</evidence>
<gene>
    <name type="primary">PSBS</name>
</gene>
<dbReference type="EMBL" id="S49864">
    <property type="protein sequence ID" value="AAB24338.1"/>
    <property type="molecule type" value="mRNA"/>
</dbReference>
<dbReference type="EMBL" id="X68552">
    <property type="protein sequence ID" value="CAA48557.1"/>
    <property type="molecule type" value="mRNA"/>
</dbReference>
<dbReference type="PIR" id="S26953">
    <property type="entry name" value="S26953"/>
</dbReference>
<dbReference type="PDB" id="4RI2">
    <property type="method" value="X-ray"/>
    <property type="resolution" value="2.35 A"/>
    <property type="chains" value="A/B=63-274"/>
</dbReference>
<dbReference type="PDB" id="4RI3">
    <property type="method" value="X-ray"/>
    <property type="resolution" value="2.70 A"/>
    <property type="chains" value="A/B=63-274"/>
</dbReference>
<dbReference type="PDBsum" id="4RI2"/>
<dbReference type="PDBsum" id="4RI3"/>
<dbReference type="SMR" id="Q02060"/>
<dbReference type="DIP" id="DIP-61707N"/>
<dbReference type="OrthoDB" id="48883at2759"/>
<dbReference type="EvolutionaryTrace" id="Q02060"/>
<dbReference type="Proteomes" id="UP001155700">
    <property type="component" value="Unplaced"/>
</dbReference>
<dbReference type="GO" id="GO:0009535">
    <property type="term" value="C:chloroplast thylakoid membrane"/>
    <property type="evidence" value="ECO:0000318"/>
    <property type="project" value="GO_Central"/>
</dbReference>
<dbReference type="GO" id="GO:0009523">
    <property type="term" value="C:photosystem II"/>
    <property type="evidence" value="ECO:0007669"/>
    <property type="project" value="UniProtKB-KW"/>
</dbReference>
<dbReference type="GO" id="GO:0042802">
    <property type="term" value="F:identical protein binding"/>
    <property type="evidence" value="ECO:0000353"/>
    <property type="project" value="IntAct"/>
</dbReference>
<dbReference type="GO" id="GO:0051219">
    <property type="term" value="F:phosphoprotein binding"/>
    <property type="evidence" value="ECO:0000353"/>
    <property type="project" value="CAFA"/>
</dbReference>
<dbReference type="GO" id="GO:0015979">
    <property type="term" value="P:photosynthesis"/>
    <property type="evidence" value="ECO:0007669"/>
    <property type="project" value="UniProtKB-KW"/>
</dbReference>
<dbReference type="FunFam" id="1.10.3460.10:FF:000008">
    <property type="entry name" value="Photosystem II 22 kDa protein, chloroplastic"/>
    <property type="match status" value="1"/>
</dbReference>
<dbReference type="Gene3D" id="1.10.3460.10">
    <property type="entry name" value="Chlorophyll a/b binding protein domain"/>
    <property type="match status" value="2"/>
</dbReference>
<dbReference type="InterPro" id="IPR022796">
    <property type="entry name" value="Chloroa_b-bind"/>
</dbReference>
<dbReference type="PANTHER" id="PTHR14154">
    <property type="entry name" value="UPF0041 BRAIN PROTEIN 44-RELATED"/>
    <property type="match status" value="1"/>
</dbReference>
<dbReference type="Pfam" id="PF00504">
    <property type="entry name" value="Chloroa_b-bind"/>
    <property type="match status" value="1"/>
</dbReference>
<dbReference type="SUPFAM" id="SSF103511">
    <property type="entry name" value="Chlorophyll a-b binding protein"/>
    <property type="match status" value="1"/>
</dbReference>
<protein>
    <recommendedName>
        <fullName>Photosystem II 22 kDa protein, chloroplastic</fullName>
    </recommendedName>
    <alternativeName>
        <fullName>CP22</fullName>
    </alternativeName>
</protein>
<comment type="function">
    <text evidence="1">Seems to be involved in non-photochemical quenching, a process maintains the balance between dissipation and utilization of light energy to minimize generation of oxidizing molecules, thereby protecting the plant against photo-oxidative damage.</text>
</comment>
<comment type="interaction">
    <interactant intactId="EBI-16169411">
        <id>Q02060</id>
    </interactant>
    <interactant intactId="EBI-16169411">
        <id>Q02060</id>
        <label>PSBS</label>
    </interactant>
    <organismsDiffer>false</organismsDiffer>
    <experiments>3</experiments>
</comment>
<comment type="subcellular location">
    <subcellularLocation>
        <location>Plastid</location>
        <location>Chloroplast thylakoid membrane</location>
        <topology>Multi-pass membrane protein</topology>
    </subcellularLocation>
    <text>Extreme lateral location to the appressed thylakoid regions.</text>
</comment>
<comment type="PTM">
    <text>The N-terminus is blocked.</text>
</comment>
<comment type="similarity">
    <text evidence="3">Belongs to the ELIP/psbS family.</text>
</comment>
<sequence length="274" mass="29197">MAQAMLLMMPGVSTTNTIDLKRNALLKLQIQKIKPKSSTSNLFFSPLPSSSSSSSTVFKTLALFKSKAKAPKKVEKPKLKVEDGLFGTSGGIGFTKENELFVGRVAMIGFAASLLGEGITGKGILSQLNLETGIPIYEAEPLLLFFILFTLLGAIGALGDRGRFVDEPTTGLEKAVIPPGKDVRSALGLKTKGPLFGFTKSNELFVGRLAQLGFAFSLIGEIITGKGALAQLNIETGVPINEIEPLVLLNVVFFFIAAINPGTGKFITDDEEED</sequence>
<accession>Q02060</accession>
<proteinExistence type="evidence at protein level"/>
<feature type="transit peptide" description="Chloroplast" evidence="2">
    <location>
        <begin position="1"/>
        <end position="69"/>
    </location>
</feature>
<feature type="chain" id="PRO_0000007808" description="Photosystem II 22 kDa protein, chloroplastic">
    <location>
        <begin position="70"/>
        <end position="274"/>
    </location>
</feature>
<feature type="transmembrane region" description="Helical" evidence="2">
    <location>
        <begin position="105"/>
        <end position="125"/>
    </location>
</feature>
<feature type="transmembrane region" description="Helical" evidence="2">
    <location>
        <begin position="139"/>
        <end position="159"/>
    </location>
</feature>
<feature type="transmembrane region" description="Helical" evidence="2">
    <location>
        <begin position="204"/>
        <end position="224"/>
    </location>
</feature>
<feature type="transmembrane region" description="Helical" evidence="2">
    <location>
        <begin position="239"/>
        <end position="259"/>
    </location>
</feature>
<feature type="repeat" description="1">
    <location>
        <begin position="64"/>
        <end position="167"/>
    </location>
</feature>
<feature type="repeat" description="2">
    <location>
        <begin position="168"/>
        <end position="273"/>
    </location>
</feature>
<feature type="helix" evidence="5">
    <location>
        <begin position="85"/>
        <end position="87"/>
    </location>
</feature>
<feature type="strand" evidence="4">
    <location>
        <begin position="89"/>
        <end position="91"/>
    </location>
</feature>
<feature type="helix" evidence="4">
    <location>
        <begin position="96"/>
        <end position="120"/>
    </location>
</feature>
<feature type="helix" evidence="4">
    <location>
        <begin position="124"/>
        <end position="127"/>
    </location>
</feature>
<feature type="helix" evidence="4">
    <location>
        <begin position="136"/>
        <end position="138"/>
    </location>
</feature>
<feature type="helix" evidence="4">
    <location>
        <begin position="141"/>
        <end position="154"/>
    </location>
</feature>
<feature type="turn" evidence="4">
    <location>
        <begin position="155"/>
        <end position="157"/>
    </location>
</feature>
<feature type="strand" evidence="4">
    <location>
        <begin position="161"/>
        <end position="165"/>
    </location>
</feature>
<feature type="helix" evidence="4">
    <location>
        <begin position="200"/>
        <end position="224"/>
    </location>
</feature>
<feature type="helix" evidence="4">
    <location>
        <begin position="228"/>
        <end position="236"/>
    </location>
</feature>
<feature type="helix" evidence="4">
    <location>
        <begin position="240"/>
        <end position="259"/>
    </location>
</feature>
<feature type="strand" evidence="4">
    <location>
        <begin position="263"/>
        <end position="267"/>
    </location>
</feature>
<keyword id="KW-0002">3D-structure</keyword>
<keyword id="KW-0150">Chloroplast</keyword>
<keyword id="KW-0472">Membrane</keyword>
<keyword id="KW-0602">Photosynthesis</keyword>
<keyword id="KW-0604">Photosystem II</keyword>
<keyword id="KW-0934">Plastid</keyword>
<keyword id="KW-1185">Reference proteome</keyword>
<keyword id="KW-0677">Repeat</keyword>
<keyword id="KW-0793">Thylakoid</keyword>
<keyword id="KW-0809">Transit peptide</keyword>
<keyword id="KW-0812">Transmembrane</keyword>
<keyword id="KW-1133">Transmembrane helix</keyword>